<proteinExistence type="inferred from homology"/>
<reference key="1">
    <citation type="submission" date="2006-09" db="EMBL/GenBank/DDBJ databases">
        <title>NISC comparative sequencing initiative.</title>
        <authorList>
            <person name="Antonellis A."/>
            <person name="Ayele K."/>
            <person name="Benjamin B."/>
            <person name="Blakesley R.W."/>
            <person name="Boakye A."/>
            <person name="Bouffard G.G."/>
            <person name="Brinkley C."/>
            <person name="Brooks S."/>
            <person name="Chu G."/>
            <person name="Coleman H."/>
            <person name="Engle J."/>
            <person name="Gestole M."/>
            <person name="Greene A."/>
            <person name="Guan X."/>
            <person name="Gupta J."/>
            <person name="Haghighi P."/>
            <person name="Han J."/>
            <person name="Hansen N."/>
            <person name="Ho S.-L."/>
            <person name="Hu P."/>
            <person name="Hunter G."/>
            <person name="Hurle B."/>
            <person name="Idol J.R."/>
            <person name="Kwong P."/>
            <person name="Laric P."/>
            <person name="Larson S."/>
            <person name="Lee-Lin S.-Q."/>
            <person name="Legaspi R."/>
            <person name="Madden M."/>
            <person name="Maduro Q.L."/>
            <person name="Maduro V.B."/>
            <person name="Margulies E.H."/>
            <person name="Masiello C."/>
            <person name="Maskeri B."/>
            <person name="McDowell J."/>
            <person name="Mojidi H.A."/>
            <person name="Mullikin J.C."/>
            <person name="Oestreicher J.S."/>
            <person name="Park M."/>
            <person name="Portnoy M.E."/>
            <person name="Prasad A."/>
            <person name="Puri O."/>
            <person name="Reddix-Dugue N."/>
            <person name="Schandler K."/>
            <person name="Schueler M.G."/>
            <person name="Sison C."/>
            <person name="Stantripop S."/>
            <person name="Stephen E."/>
            <person name="Taye A."/>
            <person name="Thomas J.W."/>
            <person name="Thomas P.J."/>
            <person name="Tsipouri V."/>
            <person name="Ung L."/>
            <person name="Vogt J.L."/>
            <person name="Wetherby K.D."/>
            <person name="Young A."/>
            <person name="Green E.D."/>
        </authorList>
    </citation>
    <scope>NUCLEOTIDE SEQUENCE [LARGE SCALE GENOMIC DNA]</scope>
</reference>
<comment type="function">
    <text evidence="1">May act as a scaffolding protein within caveolar membranes. Interacts directly with G-protein alpha subunits and can functionally regulate their activity. Acts as an accessory protein in conjunction with CAV1 in targeting to lipid rafts and driving caveolae formation. Positive regulator of cellular mitogenesis of the MAPK signaling pathway. Required for the insulin-stimulated nuclear translocation and activation of MAPK1 and STAT3, and the subsequent regulation of cell cycle progression (By similarity).</text>
</comment>
<comment type="subunit">
    <text evidence="1">Monomer or homodimer. Interacts with CAV1; the interaction forms a stable heterooligomeric complex that is required for targeting to lipid rafts and for caveolae formation. Tyrosine phosphorylated forms do not form heterooligomers with the Tyr-19-phosphorylated form existing as a monomer or dimer. Interacts (tyrosine phosphorylated form) with the SH2 domain-containing proteins, RASA1, NCK1 and SRC. Interacts (tyrosine phosphorylated form) with INSR. Interacts (Tyr-19 phosphorylated form) with MAPK1 (phosphorylated form); the interaction, promoted by insulin, leads to nuclear location and MAPK1 activation. Interacts with STAT3; the interaction is increased on insulin-induced tyrosine phosphorylation leading to STAT activation (By similarity).</text>
</comment>
<comment type="subcellular location">
    <subcellularLocation>
        <location evidence="1">Nucleus</location>
    </subcellularLocation>
    <subcellularLocation>
        <location evidence="1">Cytoplasm</location>
    </subcellularLocation>
    <subcellularLocation>
        <location>Golgi apparatus membrane</location>
        <topology>Peripheral membrane protein</topology>
    </subcellularLocation>
    <subcellularLocation>
        <location>Cell membrane</location>
        <topology>Peripheral membrane protein</topology>
    </subcellularLocation>
    <subcellularLocation>
        <location>Membrane</location>
        <location>Caveola</location>
        <topology>Peripheral membrane protein</topology>
    </subcellularLocation>
    <text evidence="1">Potential hairpin-like structure in the membrane. Membrane protein of caveolae. Tyr-19-phosphorylated form is enriched at sites of cell-cell contact and is translocated to the nucleus in complex with MAPK1 in response to insulin. CAV1-mediated Ser-23-phosphorylated form locates to the plasma membrane (By similarity).</text>
</comment>
<comment type="PTM">
    <text evidence="1">Phosphorylated on serine and tyrosine residues. CAV1 promotes phosphorylation on Ser-23 which then targets the complex to the plasma membrane, lipid rafts and caveolae. Phosphorylation on Tyr-19 is required for insulin-induced phosphorylation of MAPK1 and DNA binding of STAT3. Tyrosine phosphorylation is induced by both EGF and insulin (By similarity).</text>
</comment>
<comment type="similarity">
    <text evidence="5">Belongs to the caveolin family.</text>
</comment>
<organism>
    <name type="scientific">Oryctolagus cuniculus</name>
    <name type="common">Rabbit</name>
    <dbReference type="NCBI Taxonomy" id="9986"/>
    <lineage>
        <taxon>Eukaryota</taxon>
        <taxon>Metazoa</taxon>
        <taxon>Chordata</taxon>
        <taxon>Craniata</taxon>
        <taxon>Vertebrata</taxon>
        <taxon>Euteleostomi</taxon>
        <taxon>Mammalia</taxon>
        <taxon>Eutheria</taxon>
        <taxon>Euarchontoglires</taxon>
        <taxon>Glires</taxon>
        <taxon>Lagomorpha</taxon>
        <taxon>Leporidae</taxon>
        <taxon>Oryctolagus</taxon>
    </lineage>
</organism>
<keyword id="KW-1003">Cell membrane</keyword>
<keyword id="KW-0963">Cytoplasm</keyword>
<keyword id="KW-0333">Golgi apparatus</keyword>
<keyword id="KW-0472">Membrane</keyword>
<keyword id="KW-0539">Nucleus</keyword>
<keyword id="KW-0597">Phosphoprotein</keyword>
<keyword id="KW-1185">Reference proteome</keyword>
<name>CAV2_RABIT</name>
<evidence type="ECO:0000250" key="1"/>
<evidence type="ECO:0000250" key="2">
    <source>
        <dbReference type="UniProtKB" id="P51636"/>
    </source>
</evidence>
<evidence type="ECO:0000250" key="3">
    <source>
        <dbReference type="UniProtKB" id="Q9WVC3"/>
    </source>
</evidence>
<evidence type="ECO:0000255" key="4"/>
<evidence type="ECO:0000305" key="5"/>
<accession>Q09YN7</accession>
<dbReference type="EMBL" id="DP000006">
    <property type="protein sequence ID" value="AAY89010.1"/>
    <property type="molecule type" value="Genomic_DNA"/>
</dbReference>
<dbReference type="RefSeq" id="NP_001164493.1">
    <property type="nucleotide sequence ID" value="NM_001171022.1"/>
</dbReference>
<dbReference type="SMR" id="Q09YN7"/>
<dbReference type="FunCoup" id="Q09YN7">
    <property type="interactions" value="111"/>
</dbReference>
<dbReference type="STRING" id="9986.ENSOCUP00000012478"/>
<dbReference type="PaxDb" id="9986-ENSOCUP00000012478"/>
<dbReference type="GeneID" id="100126563"/>
<dbReference type="KEGG" id="ocu:100126563"/>
<dbReference type="CTD" id="858"/>
<dbReference type="eggNOG" id="ENOG502RZYX">
    <property type="taxonomic scope" value="Eukaryota"/>
</dbReference>
<dbReference type="InParanoid" id="Q09YN7"/>
<dbReference type="OrthoDB" id="5917823at2759"/>
<dbReference type="Proteomes" id="UP000001811">
    <property type="component" value="Unplaced"/>
</dbReference>
<dbReference type="GO" id="GO:0005901">
    <property type="term" value="C:caveola"/>
    <property type="evidence" value="ECO:0000250"/>
    <property type="project" value="UniProtKB"/>
</dbReference>
<dbReference type="GO" id="GO:0031410">
    <property type="term" value="C:cytoplasmic vesicle"/>
    <property type="evidence" value="ECO:0007669"/>
    <property type="project" value="TreeGrafter"/>
</dbReference>
<dbReference type="GO" id="GO:0005925">
    <property type="term" value="C:focal adhesion"/>
    <property type="evidence" value="ECO:0007669"/>
    <property type="project" value="TreeGrafter"/>
</dbReference>
<dbReference type="GO" id="GO:0000139">
    <property type="term" value="C:Golgi membrane"/>
    <property type="evidence" value="ECO:0007669"/>
    <property type="project" value="UniProtKB-SubCell"/>
</dbReference>
<dbReference type="GO" id="GO:0005634">
    <property type="term" value="C:nucleus"/>
    <property type="evidence" value="ECO:0007669"/>
    <property type="project" value="UniProtKB-SubCell"/>
</dbReference>
<dbReference type="GO" id="GO:0048471">
    <property type="term" value="C:perinuclear region of cytoplasm"/>
    <property type="evidence" value="ECO:0000250"/>
    <property type="project" value="UniProtKB"/>
</dbReference>
<dbReference type="GO" id="GO:0044853">
    <property type="term" value="C:plasma membrane raft"/>
    <property type="evidence" value="ECO:0000250"/>
    <property type="project" value="UniProtKB"/>
</dbReference>
<dbReference type="GO" id="GO:0042383">
    <property type="term" value="C:sarcolemma"/>
    <property type="evidence" value="ECO:0007669"/>
    <property type="project" value="TreeGrafter"/>
</dbReference>
<dbReference type="GO" id="GO:0031748">
    <property type="term" value="F:D1 dopamine receptor binding"/>
    <property type="evidence" value="ECO:0000250"/>
    <property type="project" value="UniProtKB"/>
</dbReference>
<dbReference type="GO" id="GO:0060090">
    <property type="term" value="F:molecular adaptor activity"/>
    <property type="evidence" value="ECO:0007669"/>
    <property type="project" value="TreeGrafter"/>
</dbReference>
<dbReference type="GO" id="GO:0019901">
    <property type="term" value="F:protein kinase binding"/>
    <property type="evidence" value="ECO:0007669"/>
    <property type="project" value="TreeGrafter"/>
</dbReference>
<dbReference type="GO" id="GO:0070836">
    <property type="term" value="P:caveola assembly"/>
    <property type="evidence" value="ECO:0000250"/>
    <property type="project" value="UniProtKB"/>
</dbReference>
<dbReference type="GO" id="GO:0007029">
    <property type="term" value="P:endoplasmic reticulum organization"/>
    <property type="evidence" value="ECO:0000250"/>
    <property type="project" value="UniProtKB"/>
</dbReference>
<dbReference type="GO" id="GO:0008286">
    <property type="term" value="P:insulin receptor signaling pathway"/>
    <property type="evidence" value="ECO:0007669"/>
    <property type="project" value="TreeGrafter"/>
</dbReference>
<dbReference type="GO" id="GO:0007005">
    <property type="term" value="P:mitochondrion organization"/>
    <property type="evidence" value="ECO:0000250"/>
    <property type="project" value="UniProtKB"/>
</dbReference>
<dbReference type="GO" id="GO:0001937">
    <property type="term" value="P:negative regulation of endothelial cell proliferation"/>
    <property type="evidence" value="ECO:0000250"/>
    <property type="project" value="UniProtKB"/>
</dbReference>
<dbReference type="GO" id="GO:0060161">
    <property type="term" value="P:positive regulation of dopamine receptor signaling pathway"/>
    <property type="evidence" value="ECO:0000250"/>
    <property type="project" value="UniProtKB"/>
</dbReference>
<dbReference type="GO" id="GO:0051480">
    <property type="term" value="P:regulation of cytosolic calcium ion concentration"/>
    <property type="evidence" value="ECO:0007669"/>
    <property type="project" value="TreeGrafter"/>
</dbReference>
<dbReference type="GO" id="GO:0048741">
    <property type="term" value="P:skeletal muscle fiber development"/>
    <property type="evidence" value="ECO:0000250"/>
    <property type="project" value="UniProtKB"/>
</dbReference>
<dbReference type="GO" id="GO:0048278">
    <property type="term" value="P:vesicle docking"/>
    <property type="evidence" value="ECO:0000250"/>
    <property type="project" value="UniProtKB"/>
</dbReference>
<dbReference type="GO" id="GO:0006906">
    <property type="term" value="P:vesicle fusion"/>
    <property type="evidence" value="ECO:0000250"/>
    <property type="project" value="UniProtKB"/>
</dbReference>
<dbReference type="InterPro" id="IPR001612">
    <property type="entry name" value="Caveolin"/>
</dbReference>
<dbReference type="InterPro" id="IPR018361">
    <property type="entry name" value="Caveolin_CS"/>
</dbReference>
<dbReference type="PANTHER" id="PTHR10844">
    <property type="entry name" value="CAVEOLIN"/>
    <property type="match status" value="1"/>
</dbReference>
<dbReference type="PANTHER" id="PTHR10844:SF3">
    <property type="entry name" value="CAVEOLIN-2"/>
    <property type="match status" value="1"/>
</dbReference>
<dbReference type="Pfam" id="PF01146">
    <property type="entry name" value="Caveolin"/>
    <property type="match status" value="1"/>
</dbReference>
<dbReference type="PROSITE" id="PS01210">
    <property type="entry name" value="CAVEOLIN"/>
    <property type="match status" value="1"/>
</dbReference>
<feature type="chain" id="PRO_0000260383" description="Caveolin-2">
    <location>
        <begin position="1"/>
        <end position="162"/>
    </location>
</feature>
<feature type="topological domain" description="Cytoplasmic" evidence="4">
    <location>
        <begin position="1"/>
        <end position="86"/>
    </location>
</feature>
<feature type="intramembrane region" description="Helical" evidence="4">
    <location>
        <begin position="87"/>
        <end position="107"/>
    </location>
</feature>
<feature type="topological domain" description="Cytoplasmic" evidence="4">
    <location>
        <begin position="108"/>
        <end position="162"/>
    </location>
</feature>
<feature type="modified residue" description="Phosphotyrosine; by SRC" evidence="2">
    <location>
        <position position="19"/>
    </location>
</feature>
<feature type="modified residue" description="Phosphoserine" evidence="3">
    <location>
        <position position="20"/>
    </location>
</feature>
<feature type="modified residue" description="Phosphoserine" evidence="2">
    <location>
        <position position="23"/>
    </location>
</feature>
<gene>
    <name type="primary">CAV2</name>
</gene>
<protein>
    <recommendedName>
        <fullName>Caveolin-2</fullName>
    </recommendedName>
</protein>
<sequence length="162" mass="17968">MGLETEKADVQLFMDDDAYSHHSGVDFADPEKFPDTGPDRDPHGLNSHLKLGFEDVIAEPVTTHSFDKVWICSHALFEISKYVLYKFLTVFLAIPLAFAAGVLFAVLSCLHIWILMPFVKTCLMVLPSVQTIWRSVTDVVIAPLCASIGRSFSSVGLQLSHD</sequence>